<protein>
    <recommendedName>
        <fullName evidence="3">Conotoxin Reg12h</fullName>
    </recommendedName>
</protein>
<sequence length="17" mass="1792">RCCPMPGCFAGPFCPCC</sequence>
<organism>
    <name type="scientific">Conus regius</name>
    <name type="common">Crown cone</name>
    <dbReference type="NCBI Taxonomy" id="101314"/>
    <lineage>
        <taxon>Eukaryota</taxon>
        <taxon>Metazoa</taxon>
        <taxon>Spiralia</taxon>
        <taxon>Lophotrochozoa</taxon>
        <taxon>Mollusca</taxon>
        <taxon>Gastropoda</taxon>
        <taxon>Caenogastropoda</taxon>
        <taxon>Neogastropoda</taxon>
        <taxon>Conoidea</taxon>
        <taxon>Conidae</taxon>
        <taxon>Conus</taxon>
        <taxon>Stephanoconus</taxon>
    </lineage>
</organism>
<evidence type="ECO:0000250" key="1">
    <source>
        <dbReference type="UniProtKB" id="Q5EHP3"/>
    </source>
</evidence>
<evidence type="ECO:0000269" key="2">
    <source>
    </source>
</evidence>
<evidence type="ECO:0000303" key="3">
    <source>
    </source>
</evidence>
<evidence type="ECO:0000305" key="4"/>
<evidence type="ECO:0000305" key="5">
    <source>
    </source>
</evidence>
<proteinExistence type="evidence at protein level"/>
<keyword id="KW-0903">Direct protein sequencing</keyword>
<keyword id="KW-1015">Disulfide bond</keyword>
<keyword id="KW-0964">Secreted</keyword>
<keyword id="KW-0800">Toxin</keyword>
<comment type="subcellular location">
    <subcellularLocation>
        <location evidence="2">Secreted</location>
    </subcellularLocation>
</comment>
<comment type="tissue specificity">
    <text evidence="5">Expressed by the venom duct.</text>
</comment>
<comment type="domain">
    <text evidence="4">The cysteine framework is III (CC-C-C-CC). Classified in the M-1 branch, since 1 residue stands between the fourth and the fifth cysteine residues.</text>
</comment>
<comment type="similarity">
    <text evidence="4">Belongs to the conotoxin M superfamily.</text>
</comment>
<name>CM3CH_CONRE</name>
<accession>P85020</accession>
<dbReference type="ConoServer" id="8538">
    <property type="toxin name" value="reg3h"/>
</dbReference>
<dbReference type="GO" id="GO:0005576">
    <property type="term" value="C:extracellular region"/>
    <property type="evidence" value="ECO:0007669"/>
    <property type="project" value="UniProtKB-SubCell"/>
</dbReference>
<dbReference type="GO" id="GO:0090729">
    <property type="term" value="F:toxin activity"/>
    <property type="evidence" value="ECO:0007669"/>
    <property type="project" value="UniProtKB-KW"/>
</dbReference>
<reference key="1">
    <citation type="journal article" date="2006" name="Prog. Mol. Subcell. Biol.">
        <title>Hyperhydroxylation: a new strategy for neuronal targeting by venomous marine molluscs.</title>
        <authorList>
            <person name="Franco A."/>
            <person name="Pisarewicz K."/>
            <person name="Moller C."/>
            <person name="Mora D."/>
            <person name="Fields G.B."/>
            <person name="Mari F."/>
        </authorList>
    </citation>
    <scope>PROTEIN SEQUENCE</scope>
    <scope>SUBCELLULAR LOCATION</scope>
    <source>
        <tissue>Venom</tissue>
    </source>
</reference>
<feature type="peptide" id="PRO_0000259394" description="Conotoxin Reg12h" evidence="2">
    <location>
        <begin position="1"/>
        <end position="17"/>
    </location>
</feature>
<feature type="disulfide bond" evidence="1">
    <location>
        <begin position="2"/>
        <end position="16"/>
    </location>
</feature>
<feature type="disulfide bond" evidence="1">
    <location>
        <begin position="3"/>
        <end position="14"/>
    </location>
</feature>
<feature type="disulfide bond" evidence="1">
    <location>
        <begin position="8"/>
        <end position="17"/>
    </location>
</feature>